<keyword id="KW-0028">Amino-acid biosynthesis</keyword>
<keyword id="KW-0057">Aromatic amino acid biosynthesis</keyword>
<keyword id="KW-0170">Cobalt</keyword>
<keyword id="KW-0963">Cytoplasm</keyword>
<keyword id="KW-0456">Lyase</keyword>
<keyword id="KW-0479">Metal-binding</keyword>
<keyword id="KW-0520">NAD</keyword>
<keyword id="KW-0547">Nucleotide-binding</keyword>
<keyword id="KW-1185">Reference proteome</keyword>
<keyword id="KW-0862">Zinc</keyword>
<comment type="function">
    <text evidence="1">Catalyzes the conversion of 3-deoxy-D-arabino-heptulosonate 7-phosphate (DAHP) to dehydroquinate (DHQ).</text>
</comment>
<comment type="catalytic activity">
    <reaction evidence="1">
        <text>7-phospho-2-dehydro-3-deoxy-D-arabino-heptonate = 3-dehydroquinate + phosphate</text>
        <dbReference type="Rhea" id="RHEA:21968"/>
        <dbReference type="ChEBI" id="CHEBI:32364"/>
        <dbReference type="ChEBI" id="CHEBI:43474"/>
        <dbReference type="ChEBI" id="CHEBI:58394"/>
        <dbReference type="EC" id="4.2.3.4"/>
    </reaction>
</comment>
<comment type="cofactor">
    <cofactor evidence="1">
        <name>Co(2+)</name>
        <dbReference type="ChEBI" id="CHEBI:48828"/>
    </cofactor>
    <cofactor evidence="1">
        <name>Zn(2+)</name>
        <dbReference type="ChEBI" id="CHEBI:29105"/>
    </cofactor>
    <text evidence="1">Binds 1 divalent metal cation per subunit. Can use either Co(2+) or Zn(2+).</text>
</comment>
<comment type="cofactor">
    <cofactor evidence="1">
        <name>NAD(+)</name>
        <dbReference type="ChEBI" id="CHEBI:57540"/>
    </cofactor>
</comment>
<comment type="pathway">
    <text evidence="1">Metabolic intermediate biosynthesis; chorismate biosynthesis; chorismate from D-erythrose 4-phosphate and phosphoenolpyruvate: step 2/7.</text>
</comment>
<comment type="subcellular location">
    <subcellularLocation>
        <location evidence="1">Cytoplasm</location>
    </subcellularLocation>
</comment>
<comment type="similarity">
    <text evidence="1">Belongs to the sugar phosphate cyclases superfamily. Dehydroquinate synthase family.</text>
</comment>
<evidence type="ECO:0000255" key="1">
    <source>
        <dbReference type="HAMAP-Rule" id="MF_00110"/>
    </source>
</evidence>
<name>AROB_BLOPB</name>
<proteinExistence type="inferred from homology"/>
<protein>
    <recommendedName>
        <fullName evidence="1">3-dehydroquinate synthase</fullName>
        <shortName evidence="1">DHQS</shortName>
        <ecNumber evidence="1">4.2.3.4</ecNumber>
    </recommendedName>
</protein>
<organism>
    <name type="scientific">Blochmanniella pennsylvanica (strain BPEN)</name>
    <dbReference type="NCBI Taxonomy" id="291272"/>
    <lineage>
        <taxon>Bacteria</taxon>
        <taxon>Pseudomonadati</taxon>
        <taxon>Pseudomonadota</taxon>
        <taxon>Gammaproteobacteria</taxon>
        <taxon>Enterobacterales</taxon>
        <taxon>Enterobacteriaceae</taxon>
        <taxon>ant endosymbionts</taxon>
        <taxon>Candidatus Blochmanniella</taxon>
    </lineage>
</organism>
<reference key="1">
    <citation type="journal article" date="2005" name="Genome Res.">
        <title>Genome sequence of Blochmannia pennsylvanicus indicates parallel evolutionary trends among bacterial mutualists of insects.</title>
        <authorList>
            <person name="Degnan P.H."/>
            <person name="Lazarus A.B."/>
            <person name="Wernegreen J.J."/>
        </authorList>
    </citation>
    <scope>NUCLEOTIDE SEQUENCE [LARGE SCALE GENOMIC DNA]</scope>
    <source>
        <strain>BPEN</strain>
    </source>
</reference>
<dbReference type="EC" id="4.2.3.4" evidence="1"/>
<dbReference type="EMBL" id="CP000016">
    <property type="protein sequence ID" value="AAZ41197.1"/>
    <property type="molecule type" value="Genomic_DNA"/>
</dbReference>
<dbReference type="RefSeq" id="WP_011283108.1">
    <property type="nucleotide sequence ID" value="NC_007292.1"/>
</dbReference>
<dbReference type="SMR" id="Q492A5"/>
<dbReference type="STRING" id="291272.BPEN_591"/>
<dbReference type="KEGG" id="bpn:BPEN_591"/>
<dbReference type="eggNOG" id="COG0337">
    <property type="taxonomic scope" value="Bacteria"/>
</dbReference>
<dbReference type="HOGENOM" id="CLU_001201_0_2_6"/>
<dbReference type="OrthoDB" id="9806583at2"/>
<dbReference type="UniPathway" id="UPA00053">
    <property type="reaction ID" value="UER00085"/>
</dbReference>
<dbReference type="Proteomes" id="UP000007794">
    <property type="component" value="Chromosome"/>
</dbReference>
<dbReference type="GO" id="GO:0005737">
    <property type="term" value="C:cytoplasm"/>
    <property type="evidence" value="ECO:0007669"/>
    <property type="project" value="UniProtKB-SubCell"/>
</dbReference>
<dbReference type="GO" id="GO:0003856">
    <property type="term" value="F:3-dehydroquinate synthase activity"/>
    <property type="evidence" value="ECO:0007669"/>
    <property type="project" value="UniProtKB-UniRule"/>
</dbReference>
<dbReference type="GO" id="GO:0046872">
    <property type="term" value="F:metal ion binding"/>
    <property type="evidence" value="ECO:0007669"/>
    <property type="project" value="UniProtKB-KW"/>
</dbReference>
<dbReference type="GO" id="GO:0000166">
    <property type="term" value="F:nucleotide binding"/>
    <property type="evidence" value="ECO:0007669"/>
    <property type="project" value="UniProtKB-KW"/>
</dbReference>
<dbReference type="GO" id="GO:0008652">
    <property type="term" value="P:amino acid biosynthetic process"/>
    <property type="evidence" value="ECO:0007669"/>
    <property type="project" value="UniProtKB-KW"/>
</dbReference>
<dbReference type="GO" id="GO:0009073">
    <property type="term" value="P:aromatic amino acid family biosynthetic process"/>
    <property type="evidence" value="ECO:0007669"/>
    <property type="project" value="UniProtKB-KW"/>
</dbReference>
<dbReference type="GO" id="GO:0009423">
    <property type="term" value="P:chorismate biosynthetic process"/>
    <property type="evidence" value="ECO:0007669"/>
    <property type="project" value="UniProtKB-UniRule"/>
</dbReference>
<dbReference type="CDD" id="cd08195">
    <property type="entry name" value="DHQS"/>
    <property type="match status" value="1"/>
</dbReference>
<dbReference type="FunFam" id="3.40.50.1970:FF:000001">
    <property type="entry name" value="3-dehydroquinate synthase"/>
    <property type="match status" value="1"/>
</dbReference>
<dbReference type="Gene3D" id="3.40.50.1970">
    <property type="match status" value="1"/>
</dbReference>
<dbReference type="Gene3D" id="1.20.1090.10">
    <property type="entry name" value="Dehydroquinate synthase-like - alpha domain"/>
    <property type="match status" value="1"/>
</dbReference>
<dbReference type="HAMAP" id="MF_00110">
    <property type="entry name" value="DHQ_synthase"/>
    <property type="match status" value="1"/>
</dbReference>
<dbReference type="InterPro" id="IPR050071">
    <property type="entry name" value="Dehydroquinate_synthase"/>
</dbReference>
<dbReference type="InterPro" id="IPR016037">
    <property type="entry name" value="DHQ_synth_AroB"/>
</dbReference>
<dbReference type="InterPro" id="IPR030963">
    <property type="entry name" value="DHQ_synth_fam"/>
</dbReference>
<dbReference type="InterPro" id="IPR030960">
    <property type="entry name" value="DHQS/DOIS_N"/>
</dbReference>
<dbReference type="InterPro" id="IPR056179">
    <property type="entry name" value="DHQS_C"/>
</dbReference>
<dbReference type="NCBIfam" id="TIGR01357">
    <property type="entry name" value="aroB"/>
    <property type="match status" value="1"/>
</dbReference>
<dbReference type="PANTHER" id="PTHR43622">
    <property type="entry name" value="3-DEHYDROQUINATE SYNTHASE"/>
    <property type="match status" value="1"/>
</dbReference>
<dbReference type="PANTHER" id="PTHR43622:SF7">
    <property type="entry name" value="3-DEHYDROQUINATE SYNTHASE, CHLOROPLASTIC"/>
    <property type="match status" value="1"/>
</dbReference>
<dbReference type="Pfam" id="PF01761">
    <property type="entry name" value="DHQ_synthase"/>
    <property type="match status" value="1"/>
</dbReference>
<dbReference type="Pfam" id="PF24621">
    <property type="entry name" value="DHQS_C"/>
    <property type="match status" value="1"/>
</dbReference>
<dbReference type="PIRSF" id="PIRSF001455">
    <property type="entry name" value="DHQ_synth"/>
    <property type="match status" value="1"/>
</dbReference>
<dbReference type="SUPFAM" id="SSF56796">
    <property type="entry name" value="Dehydroquinate synthase-like"/>
    <property type="match status" value="1"/>
</dbReference>
<gene>
    <name evidence="1" type="primary">aroB</name>
    <name type="ordered locus">BPEN_591</name>
</gene>
<feature type="chain" id="PRO_0000231070" description="3-dehydroquinate synthase">
    <location>
        <begin position="1"/>
        <end position="362"/>
    </location>
</feature>
<feature type="binding site" evidence="1">
    <location>
        <begin position="71"/>
        <end position="76"/>
    </location>
    <ligand>
        <name>NAD(+)</name>
        <dbReference type="ChEBI" id="CHEBI:57540"/>
    </ligand>
</feature>
<feature type="binding site" evidence="1">
    <location>
        <begin position="105"/>
        <end position="109"/>
    </location>
    <ligand>
        <name>NAD(+)</name>
        <dbReference type="ChEBI" id="CHEBI:57540"/>
    </ligand>
</feature>
<feature type="binding site" evidence="1">
    <location>
        <begin position="129"/>
        <end position="130"/>
    </location>
    <ligand>
        <name>NAD(+)</name>
        <dbReference type="ChEBI" id="CHEBI:57540"/>
    </ligand>
</feature>
<feature type="binding site" evidence="1">
    <location>
        <position position="142"/>
    </location>
    <ligand>
        <name>NAD(+)</name>
        <dbReference type="ChEBI" id="CHEBI:57540"/>
    </ligand>
</feature>
<feature type="binding site" evidence="1">
    <location>
        <position position="151"/>
    </location>
    <ligand>
        <name>NAD(+)</name>
        <dbReference type="ChEBI" id="CHEBI:57540"/>
    </ligand>
</feature>
<feature type="binding site" evidence="1">
    <location>
        <position position="184"/>
    </location>
    <ligand>
        <name>Zn(2+)</name>
        <dbReference type="ChEBI" id="CHEBI:29105"/>
    </ligand>
</feature>
<feature type="binding site" evidence="1">
    <location>
        <position position="247"/>
    </location>
    <ligand>
        <name>Zn(2+)</name>
        <dbReference type="ChEBI" id="CHEBI:29105"/>
    </ligand>
</feature>
<feature type="binding site" evidence="1">
    <location>
        <position position="264"/>
    </location>
    <ligand>
        <name>Zn(2+)</name>
        <dbReference type="ChEBI" id="CHEBI:29105"/>
    </ligand>
</feature>
<sequence length="362" mass="40279">MEKIIIKLEKRSYPIIIADKLFNDFLPFWPLNIDDKVVLITNDRVAPIYLNILRNLLIRSGIVTDQLILPDGEQNKSLITLDTIFTKLLKKNYDRSTILIGLGGGVIGDITGFAAATYQRGIRFIQVPTTLLAQVDASIGGKTGINHILGKNMIGAFHQPIAVIINLDVLHTLSMKEFSSGLAEIIKYAIALDSSFFGWLESHLDDLLILHLPSLMYCIRRCCELKASIIAIDERDQGIRSVLNLGHTYGHAIESYLGYSQWSHGESIAAGIMMAVNTALRLNQFNCSDAKRIKLLLTRAGLPVRGPKEMTSKNYLEYMKRDKKSISGQLNLVLPTSTIGNVKTVFNVNHELVSLSIEDTNN</sequence>
<accession>Q492A5</accession>